<name>MZRA_SALA4</name>
<protein>
    <recommendedName>
        <fullName evidence="1">Modulator protein MzrA</fullName>
    </recommendedName>
</protein>
<feature type="chain" id="PRO_0000413194" description="Modulator protein MzrA">
    <location>
        <begin position="1"/>
        <end position="127"/>
    </location>
</feature>
<feature type="topological domain" description="Cytoplasmic" evidence="1">
    <location>
        <begin position="1"/>
        <end position="10"/>
    </location>
</feature>
<feature type="transmembrane region" description="Helical" evidence="1">
    <location>
        <begin position="11"/>
        <end position="31"/>
    </location>
</feature>
<feature type="topological domain" description="Periplasmic" evidence="1">
    <location>
        <begin position="32"/>
        <end position="127"/>
    </location>
</feature>
<dbReference type="EMBL" id="CP001138">
    <property type="protein sequence ID" value="ACH50615.1"/>
    <property type="status" value="ALT_INIT"/>
    <property type="molecule type" value="Genomic_DNA"/>
</dbReference>
<dbReference type="RefSeq" id="WP_000917514.1">
    <property type="nucleotide sequence ID" value="NC_011149.1"/>
</dbReference>
<dbReference type="SMR" id="B5F6N4"/>
<dbReference type="KEGG" id="sea:SeAg_B3415"/>
<dbReference type="HOGENOM" id="CLU_153761_0_0_6"/>
<dbReference type="Proteomes" id="UP000008819">
    <property type="component" value="Chromosome"/>
</dbReference>
<dbReference type="GO" id="GO:0005886">
    <property type="term" value="C:plasma membrane"/>
    <property type="evidence" value="ECO:0007669"/>
    <property type="project" value="UniProtKB-SubCell"/>
</dbReference>
<dbReference type="GO" id="GO:0019901">
    <property type="term" value="F:protein kinase binding"/>
    <property type="evidence" value="ECO:0007669"/>
    <property type="project" value="UniProtKB-UniRule"/>
</dbReference>
<dbReference type="Gene3D" id="3.30.70.260">
    <property type="match status" value="1"/>
</dbReference>
<dbReference type="HAMAP" id="MF_00904">
    <property type="entry name" value="Modulator_MzrA"/>
    <property type="match status" value="1"/>
</dbReference>
<dbReference type="InterPro" id="IPR026574">
    <property type="entry name" value="Modulator_MzrA"/>
</dbReference>
<dbReference type="InterPro" id="IPR027398">
    <property type="entry name" value="SecD-TM"/>
</dbReference>
<dbReference type="NCBIfam" id="NF007915">
    <property type="entry name" value="PRK10629.1"/>
    <property type="match status" value="1"/>
</dbReference>
<dbReference type="Pfam" id="PF13721">
    <property type="entry name" value="SecD-TM1"/>
    <property type="match status" value="1"/>
</dbReference>
<comment type="function">
    <text evidence="1">Modulates the activity of the EnvZ/OmpR two-component regulatory system, probably by directly modulating EnvZ enzymatic activity and increasing stability of phosphorylated OmpR.</text>
</comment>
<comment type="subunit">
    <text evidence="1">Interacts with EnvZ.</text>
</comment>
<comment type="subcellular location">
    <subcellularLocation>
        <location evidence="1">Cell inner membrane</location>
        <topology evidence="1">Single-pass membrane protein</topology>
    </subcellularLocation>
</comment>
<comment type="similarity">
    <text evidence="1">Belongs to the MzrA family.</text>
</comment>
<comment type="sequence caution" evidence="2">
    <conflict type="erroneous initiation">
        <sequence resource="EMBL-CDS" id="ACH50615"/>
    </conflict>
    <text>Truncated N-terminus.</text>
</comment>
<sequence length="127" mass="14290">MLKPRITARQLIWISAFLLMLTILMMTWSTLRQQESTLAIRAVNLGASMPDGFSVLHHLDANGIHFKSITPKNDMLLITFDSPAQSAAAKTVLDQTLPHGYVVAQQDDDNETVQWLSRLRESSHRFG</sequence>
<proteinExistence type="inferred from homology"/>
<keyword id="KW-0997">Cell inner membrane</keyword>
<keyword id="KW-1003">Cell membrane</keyword>
<keyword id="KW-0472">Membrane</keyword>
<keyword id="KW-0812">Transmembrane</keyword>
<keyword id="KW-1133">Transmembrane helix</keyword>
<organism>
    <name type="scientific">Salmonella agona (strain SL483)</name>
    <dbReference type="NCBI Taxonomy" id="454166"/>
    <lineage>
        <taxon>Bacteria</taxon>
        <taxon>Pseudomonadati</taxon>
        <taxon>Pseudomonadota</taxon>
        <taxon>Gammaproteobacteria</taxon>
        <taxon>Enterobacterales</taxon>
        <taxon>Enterobacteriaceae</taxon>
        <taxon>Salmonella</taxon>
    </lineage>
</organism>
<gene>
    <name evidence="1" type="primary">mzrA</name>
    <name type="ordered locus">SeAg_B3415</name>
</gene>
<reference key="1">
    <citation type="journal article" date="2011" name="J. Bacteriol.">
        <title>Comparative genomics of 28 Salmonella enterica isolates: evidence for CRISPR-mediated adaptive sublineage evolution.</title>
        <authorList>
            <person name="Fricke W.F."/>
            <person name="Mammel M.K."/>
            <person name="McDermott P.F."/>
            <person name="Tartera C."/>
            <person name="White D.G."/>
            <person name="Leclerc J.E."/>
            <person name="Ravel J."/>
            <person name="Cebula T.A."/>
        </authorList>
    </citation>
    <scope>NUCLEOTIDE SEQUENCE [LARGE SCALE GENOMIC DNA]</scope>
    <source>
        <strain>SL483</strain>
    </source>
</reference>
<accession>B5F6N4</accession>
<evidence type="ECO:0000255" key="1">
    <source>
        <dbReference type="HAMAP-Rule" id="MF_00904"/>
    </source>
</evidence>
<evidence type="ECO:0000305" key="2"/>